<sequence>MRYGLSAQRSLINVCSRRFFGKDAKEQFLKNLSSIPASKHPRLVSDSDANSAMSVLIPLVTVDGRDSVLLTKRSIHLRSHRGEVCFPGGRMDPGETTTETALRETFEEIGVNAESVEIWGHLKSVIRRQADFNVTPIVGYISDERVLENLVVNSDEVQAVFTIPIDELIKKAGLTKFQSKRMKYTLPSFDSTEFKVHHNAPNEYLHSTQRVWGLSGVMLHQALTLLNPDVYKHDLIVKFF</sequence>
<organism>
    <name type="scientific">Caenorhabditis elegans</name>
    <dbReference type="NCBI Taxonomy" id="6239"/>
    <lineage>
        <taxon>Eukaryota</taxon>
        <taxon>Metazoa</taxon>
        <taxon>Ecdysozoa</taxon>
        <taxon>Nematoda</taxon>
        <taxon>Chromadorea</taxon>
        <taxon>Rhabditida</taxon>
        <taxon>Rhabditina</taxon>
        <taxon>Rhabditomorpha</taxon>
        <taxon>Rhabditoidea</taxon>
        <taxon>Rhabditidae</taxon>
        <taxon>Peloderinae</taxon>
        <taxon>Caenorhabditis</taxon>
    </lineage>
</organism>
<feature type="chain" id="PRO_0000057144" description="Nudix hydrolase 3">
    <location>
        <begin position="1"/>
        <end position="240"/>
    </location>
</feature>
<feature type="domain" description="Nudix hydrolase" evidence="2">
    <location>
        <begin position="50"/>
        <end position="190"/>
    </location>
</feature>
<feature type="short sequence motif" description="Nudix box">
    <location>
        <begin position="89"/>
        <end position="110"/>
    </location>
</feature>
<feature type="binding site" evidence="1">
    <location>
        <position position="104"/>
    </location>
    <ligand>
        <name>Mg(2+)</name>
        <dbReference type="ChEBI" id="CHEBI:18420"/>
    </ligand>
</feature>
<feature type="binding site" evidence="1">
    <location>
        <position position="108"/>
    </location>
    <ligand>
        <name>Mg(2+)</name>
        <dbReference type="ChEBI" id="CHEBI:18420"/>
    </ligand>
</feature>
<reference key="1">
    <citation type="journal article" date="1998" name="Science">
        <title>Genome sequence of the nematode C. elegans: a platform for investigating biology.</title>
        <authorList>
            <consortium name="The C. elegans sequencing consortium"/>
        </authorList>
    </citation>
    <scope>NUCLEOTIDE SEQUENCE [LARGE SCALE GENOMIC DNA]</scope>
    <source>
        <strain>Bristol N2</strain>
    </source>
</reference>
<accession>Q23236</accession>
<protein>
    <recommendedName>
        <fullName>Nudix hydrolase 3</fullName>
        <ecNumber>3.6.1.-</ecNumber>
    </recommendedName>
</protein>
<gene>
    <name type="primary">ndx-3</name>
    <name type="ORF">Y38A8.1</name>
</gene>
<evidence type="ECO:0000250" key="1"/>
<evidence type="ECO:0000255" key="2">
    <source>
        <dbReference type="PROSITE-ProRule" id="PRU00794"/>
    </source>
</evidence>
<evidence type="ECO:0000305" key="3"/>
<name>NDX3_CAEEL</name>
<keyword id="KW-0378">Hydrolase</keyword>
<keyword id="KW-0460">Magnesium</keyword>
<keyword id="KW-0464">Manganese</keyword>
<keyword id="KW-0479">Metal-binding</keyword>
<keyword id="KW-1185">Reference proteome</keyword>
<dbReference type="EC" id="3.6.1.-"/>
<dbReference type="EMBL" id="FO081756">
    <property type="protein sequence ID" value="CCD73693.1"/>
    <property type="molecule type" value="Genomic_DNA"/>
</dbReference>
<dbReference type="PIR" id="T26648">
    <property type="entry name" value="T26648"/>
</dbReference>
<dbReference type="RefSeq" id="NP_001380056.1">
    <property type="nucleotide sequence ID" value="NM_001393058.1"/>
</dbReference>
<dbReference type="RefSeq" id="NP_494912.2">
    <property type="nucleotide sequence ID" value="NM_062511.3"/>
</dbReference>
<dbReference type="SMR" id="Q23236"/>
<dbReference type="BioGRID" id="39210">
    <property type="interactions" value="1"/>
</dbReference>
<dbReference type="FunCoup" id="Q23236">
    <property type="interactions" value="397"/>
</dbReference>
<dbReference type="STRING" id="6239.Y38A8.1.1"/>
<dbReference type="PaxDb" id="6239-Y38A8.1"/>
<dbReference type="PeptideAtlas" id="Q23236"/>
<dbReference type="EnsemblMetazoa" id="Y38A8.1.1">
    <property type="protein sequence ID" value="Y38A8.1.1"/>
    <property type="gene ID" value="WBGene00003580"/>
</dbReference>
<dbReference type="GeneID" id="173857"/>
<dbReference type="UCSC" id="Y38A8.1">
    <property type="organism name" value="c. elegans"/>
</dbReference>
<dbReference type="AGR" id="WB:WBGene00003580"/>
<dbReference type="WormBase" id="Y38A8.1">
    <property type="protein sequence ID" value="CE45628"/>
    <property type="gene ID" value="WBGene00003580"/>
    <property type="gene designation" value="ndx-3"/>
</dbReference>
<dbReference type="eggNOG" id="KOG3069">
    <property type="taxonomic scope" value="Eukaryota"/>
</dbReference>
<dbReference type="HOGENOM" id="CLU_040940_4_1_1"/>
<dbReference type="InParanoid" id="Q23236"/>
<dbReference type="OMA" id="HYRIWGI"/>
<dbReference type="OrthoDB" id="10262892at2759"/>
<dbReference type="PhylomeDB" id="Q23236"/>
<dbReference type="PRO" id="PR:Q23236"/>
<dbReference type="Proteomes" id="UP000001940">
    <property type="component" value="Chromosome II"/>
</dbReference>
<dbReference type="Bgee" id="WBGene00003580">
    <property type="expression patterns" value="Expressed in germ line (C elegans) and 4 other cell types or tissues"/>
</dbReference>
<dbReference type="GO" id="GO:0010945">
    <property type="term" value="F:coenzyme A diphosphatase activity"/>
    <property type="evidence" value="ECO:0007669"/>
    <property type="project" value="InterPro"/>
</dbReference>
<dbReference type="GO" id="GO:0000287">
    <property type="term" value="F:magnesium ion binding"/>
    <property type="evidence" value="ECO:0007669"/>
    <property type="project" value="InterPro"/>
</dbReference>
<dbReference type="GO" id="GO:0030145">
    <property type="term" value="F:manganese ion binding"/>
    <property type="evidence" value="ECO:0007669"/>
    <property type="project" value="InterPro"/>
</dbReference>
<dbReference type="GO" id="GO:0009132">
    <property type="term" value="P:nucleoside diphosphate metabolic process"/>
    <property type="evidence" value="ECO:0007669"/>
    <property type="project" value="InterPro"/>
</dbReference>
<dbReference type="CDD" id="cd03426">
    <property type="entry name" value="NUDIX_CoAse_Nudt7"/>
    <property type="match status" value="1"/>
</dbReference>
<dbReference type="Gene3D" id="3.90.79.10">
    <property type="entry name" value="Nucleoside Triphosphate Pyrophosphohydrolase"/>
    <property type="match status" value="1"/>
</dbReference>
<dbReference type="InterPro" id="IPR045121">
    <property type="entry name" value="CoAse"/>
</dbReference>
<dbReference type="InterPro" id="IPR015797">
    <property type="entry name" value="NUDIX_hydrolase-like_dom_sf"/>
</dbReference>
<dbReference type="InterPro" id="IPR020084">
    <property type="entry name" value="NUDIX_hydrolase_CS"/>
</dbReference>
<dbReference type="InterPro" id="IPR000086">
    <property type="entry name" value="NUDIX_hydrolase_dom"/>
</dbReference>
<dbReference type="InterPro" id="IPR000059">
    <property type="entry name" value="NUDIX_hydrolase_NudL_CS"/>
</dbReference>
<dbReference type="PANTHER" id="PTHR12992:SF11">
    <property type="entry name" value="MITOCHONDRIAL COENZYME A DIPHOSPHATASE NUDT8"/>
    <property type="match status" value="1"/>
</dbReference>
<dbReference type="PANTHER" id="PTHR12992">
    <property type="entry name" value="NUDIX HYDROLASE"/>
    <property type="match status" value="1"/>
</dbReference>
<dbReference type="Pfam" id="PF00293">
    <property type="entry name" value="NUDIX"/>
    <property type="match status" value="1"/>
</dbReference>
<dbReference type="SUPFAM" id="SSF55811">
    <property type="entry name" value="Nudix"/>
    <property type="match status" value="1"/>
</dbReference>
<dbReference type="PROSITE" id="PS51462">
    <property type="entry name" value="NUDIX"/>
    <property type="match status" value="1"/>
</dbReference>
<dbReference type="PROSITE" id="PS00893">
    <property type="entry name" value="NUDIX_BOX"/>
    <property type="match status" value="1"/>
</dbReference>
<dbReference type="PROSITE" id="PS01293">
    <property type="entry name" value="NUDIX_COA"/>
    <property type="match status" value="1"/>
</dbReference>
<comment type="function">
    <text evidence="1">Probably mediates the hydrolysis of some nucleoside diphosphate derivatives.</text>
</comment>
<comment type="cofactor">
    <cofactor evidence="1">
        <name>Mn(2+)</name>
        <dbReference type="ChEBI" id="CHEBI:29035"/>
    </cofactor>
    <cofactor evidence="1">
        <name>Mg(2+)</name>
        <dbReference type="ChEBI" id="CHEBI:18420"/>
    </cofactor>
</comment>
<comment type="similarity">
    <text evidence="3">Belongs to the Nudix hydrolase family. PCD1 subfamily.</text>
</comment>
<proteinExistence type="inferred from homology"/>